<sequence length="427" mass="48445">MKAKVEKIETNVIKLEIRVEAEKFDAALTKAYNKNKGRYNIPGFRKGKVPMAMVKKFYGVEVFYDDAVNFAIDESYPEALNAENIKPVDYPQVDIVELGEGKELVYTATVTTYPEVELGEYKGLDIKKPIYEVEDTEIDKQIKEMQEKNARIEVKTEGNIAKGDIAVIDFKGYIDGVAFEGGEGSDYSLEIGSGTFIDNFEEQLIGLAVGDKKEVNVTFPEAYGKEELNGKPAMFEVEIKSIKVKELPELDDEFAKDVSAVDTFAELKENLKKTLEKNNDEKAEREFEEAVITAVIENSKMDIPEVMVNKEIDAMMQDLEGRLKYQGLSLEQYMEFTGNTTEKMRDFMKENAERKVKADLVLEAIAKTEEIKATEEELNARALELGKIYGPKDPEKMAKILVKSQRNMIEKDIILENTLKFLKENCK</sequence>
<evidence type="ECO:0000255" key="1">
    <source>
        <dbReference type="HAMAP-Rule" id="MF_00303"/>
    </source>
</evidence>
<protein>
    <recommendedName>
        <fullName evidence="1">Trigger factor</fullName>
        <shortName evidence="1">TF</shortName>
        <ecNumber evidence="1">5.2.1.8</ecNumber>
    </recommendedName>
    <alternativeName>
        <fullName evidence="1">PPIase</fullName>
    </alternativeName>
</protein>
<keyword id="KW-0131">Cell cycle</keyword>
<keyword id="KW-0132">Cell division</keyword>
<keyword id="KW-0143">Chaperone</keyword>
<keyword id="KW-0963">Cytoplasm</keyword>
<keyword id="KW-0413">Isomerase</keyword>
<keyword id="KW-0697">Rotamase</keyword>
<comment type="function">
    <text evidence="1">Involved in protein export. Acts as a chaperone by maintaining the newly synthesized protein in an open conformation. Functions as a peptidyl-prolyl cis-trans isomerase.</text>
</comment>
<comment type="catalytic activity">
    <reaction evidence="1">
        <text>[protein]-peptidylproline (omega=180) = [protein]-peptidylproline (omega=0)</text>
        <dbReference type="Rhea" id="RHEA:16237"/>
        <dbReference type="Rhea" id="RHEA-COMP:10747"/>
        <dbReference type="Rhea" id="RHEA-COMP:10748"/>
        <dbReference type="ChEBI" id="CHEBI:83833"/>
        <dbReference type="ChEBI" id="CHEBI:83834"/>
        <dbReference type="EC" id="5.2.1.8"/>
    </reaction>
</comment>
<comment type="subcellular location">
    <subcellularLocation>
        <location>Cytoplasm</location>
    </subcellularLocation>
    <text evidence="1">About half TF is bound to the ribosome near the polypeptide exit tunnel while the other half is free in the cytoplasm.</text>
</comment>
<comment type="domain">
    <text evidence="1">Consists of 3 domains; the N-terminus binds the ribosome, the middle domain has PPIase activity, while the C-terminus has intrinsic chaperone activity on its own.</text>
</comment>
<comment type="similarity">
    <text evidence="1">Belongs to the FKBP-type PPIase family. Tig subfamily.</text>
</comment>
<organism>
    <name type="scientific">Clostridium beijerinckii (strain ATCC 51743 / NCIMB 8052)</name>
    <name type="common">Clostridium acetobutylicum</name>
    <dbReference type="NCBI Taxonomy" id="290402"/>
    <lineage>
        <taxon>Bacteria</taxon>
        <taxon>Bacillati</taxon>
        <taxon>Bacillota</taxon>
        <taxon>Clostridia</taxon>
        <taxon>Eubacteriales</taxon>
        <taxon>Clostridiaceae</taxon>
        <taxon>Clostridium</taxon>
    </lineage>
</organism>
<name>TIG_CLOB8</name>
<accession>A6LT26</accession>
<reference key="1">
    <citation type="submission" date="2007-06" db="EMBL/GenBank/DDBJ databases">
        <title>Complete sequence of Clostridium beijerinckii NCIMB 8052.</title>
        <authorList>
            <consortium name="US DOE Joint Genome Institute"/>
            <person name="Copeland A."/>
            <person name="Lucas S."/>
            <person name="Lapidus A."/>
            <person name="Barry K."/>
            <person name="Detter J.C."/>
            <person name="Glavina del Rio T."/>
            <person name="Hammon N."/>
            <person name="Israni S."/>
            <person name="Dalin E."/>
            <person name="Tice H."/>
            <person name="Pitluck S."/>
            <person name="Sims D."/>
            <person name="Brettin T."/>
            <person name="Bruce D."/>
            <person name="Tapia R."/>
            <person name="Brainard J."/>
            <person name="Schmutz J."/>
            <person name="Larimer F."/>
            <person name="Land M."/>
            <person name="Hauser L."/>
            <person name="Kyrpides N."/>
            <person name="Mikhailova N."/>
            <person name="Bennet G."/>
            <person name="Cann I."/>
            <person name="Chen J.-S."/>
            <person name="Contreras A.L."/>
            <person name="Jones D."/>
            <person name="Kashket E."/>
            <person name="Mitchell W."/>
            <person name="Stoddard S."/>
            <person name="Schwarz W."/>
            <person name="Qureshi N."/>
            <person name="Young M."/>
            <person name="Shi Z."/>
            <person name="Ezeji T."/>
            <person name="White B."/>
            <person name="Blaschek H."/>
            <person name="Richardson P."/>
        </authorList>
    </citation>
    <scope>NUCLEOTIDE SEQUENCE [LARGE SCALE GENOMIC DNA]</scope>
    <source>
        <strain>ATCC 51743 / NCIMB 8052</strain>
    </source>
</reference>
<gene>
    <name evidence="1" type="primary">tig</name>
    <name type="ordered locus">Cbei_1326</name>
</gene>
<feature type="chain" id="PRO_1000079034" description="Trigger factor">
    <location>
        <begin position="1"/>
        <end position="427"/>
    </location>
</feature>
<feature type="domain" description="PPIase FKBP-type" evidence="1">
    <location>
        <begin position="163"/>
        <end position="248"/>
    </location>
</feature>
<dbReference type="EC" id="5.2.1.8" evidence="1"/>
<dbReference type="EMBL" id="CP000721">
    <property type="protein sequence ID" value="ABR33506.1"/>
    <property type="molecule type" value="Genomic_DNA"/>
</dbReference>
<dbReference type="RefSeq" id="WP_011968660.1">
    <property type="nucleotide sequence ID" value="NC_009617.1"/>
</dbReference>
<dbReference type="SMR" id="A6LT26"/>
<dbReference type="KEGG" id="cbe:Cbei_1326"/>
<dbReference type="eggNOG" id="COG0544">
    <property type="taxonomic scope" value="Bacteria"/>
</dbReference>
<dbReference type="HOGENOM" id="CLU_033058_3_2_9"/>
<dbReference type="Proteomes" id="UP000000565">
    <property type="component" value="Chromosome"/>
</dbReference>
<dbReference type="GO" id="GO:0005737">
    <property type="term" value="C:cytoplasm"/>
    <property type="evidence" value="ECO:0007669"/>
    <property type="project" value="UniProtKB-SubCell"/>
</dbReference>
<dbReference type="GO" id="GO:0003755">
    <property type="term" value="F:peptidyl-prolyl cis-trans isomerase activity"/>
    <property type="evidence" value="ECO:0007669"/>
    <property type="project" value="UniProtKB-UniRule"/>
</dbReference>
<dbReference type="GO" id="GO:0044183">
    <property type="term" value="F:protein folding chaperone"/>
    <property type="evidence" value="ECO:0007669"/>
    <property type="project" value="TreeGrafter"/>
</dbReference>
<dbReference type="GO" id="GO:0043022">
    <property type="term" value="F:ribosome binding"/>
    <property type="evidence" value="ECO:0007669"/>
    <property type="project" value="TreeGrafter"/>
</dbReference>
<dbReference type="GO" id="GO:0051083">
    <property type="term" value="P:'de novo' cotranslational protein folding"/>
    <property type="evidence" value="ECO:0007669"/>
    <property type="project" value="TreeGrafter"/>
</dbReference>
<dbReference type="GO" id="GO:0051301">
    <property type="term" value="P:cell division"/>
    <property type="evidence" value="ECO:0007669"/>
    <property type="project" value="UniProtKB-KW"/>
</dbReference>
<dbReference type="GO" id="GO:0061077">
    <property type="term" value="P:chaperone-mediated protein folding"/>
    <property type="evidence" value="ECO:0007669"/>
    <property type="project" value="TreeGrafter"/>
</dbReference>
<dbReference type="GO" id="GO:0015031">
    <property type="term" value="P:protein transport"/>
    <property type="evidence" value="ECO:0007669"/>
    <property type="project" value="UniProtKB-UniRule"/>
</dbReference>
<dbReference type="GO" id="GO:0043335">
    <property type="term" value="P:protein unfolding"/>
    <property type="evidence" value="ECO:0007669"/>
    <property type="project" value="TreeGrafter"/>
</dbReference>
<dbReference type="FunFam" id="3.10.50.40:FF:000001">
    <property type="entry name" value="Trigger factor"/>
    <property type="match status" value="1"/>
</dbReference>
<dbReference type="Gene3D" id="3.10.50.40">
    <property type="match status" value="1"/>
</dbReference>
<dbReference type="Gene3D" id="3.30.70.1050">
    <property type="entry name" value="Trigger factor ribosome-binding domain"/>
    <property type="match status" value="1"/>
</dbReference>
<dbReference type="Gene3D" id="1.10.3120.10">
    <property type="entry name" value="Trigger factor, C-terminal domain"/>
    <property type="match status" value="1"/>
</dbReference>
<dbReference type="HAMAP" id="MF_00303">
    <property type="entry name" value="Trigger_factor_Tig"/>
    <property type="match status" value="1"/>
</dbReference>
<dbReference type="InterPro" id="IPR046357">
    <property type="entry name" value="PPIase_dom_sf"/>
</dbReference>
<dbReference type="InterPro" id="IPR001179">
    <property type="entry name" value="PPIase_FKBP_dom"/>
</dbReference>
<dbReference type="InterPro" id="IPR005215">
    <property type="entry name" value="Trig_fac"/>
</dbReference>
<dbReference type="InterPro" id="IPR008880">
    <property type="entry name" value="Trigger_fac_C"/>
</dbReference>
<dbReference type="InterPro" id="IPR037041">
    <property type="entry name" value="Trigger_fac_C_sf"/>
</dbReference>
<dbReference type="InterPro" id="IPR008881">
    <property type="entry name" value="Trigger_fac_ribosome-bd_bac"/>
</dbReference>
<dbReference type="InterPro" id="IPR036611">
    <property type="entry name" value="Trigger_fac_ribosome-bd_sf"/>
</dbReference>
<dbReference type="InterPro" id="IPR027304">
    <property type="entry name" value="Trigger_fact/SurA_dom_sf"/>
</dbReference>
<dbReference type="NCBIfam" id="TIGR00115">
    <property type="entry name" value="tig"/>
    <property type="match status" value="1"/>
</dbReference>
<dbReference type="PANTHER" id="PTHR30560">
    <property type="entry name" value="TRIGGER FACTOR CHAPERONE AND PEPTIDYL-PROLYL CIS/TRANS ISOMERASE"/>
    <property type="match status" value="1"/>
</dbReference>
<dbReference type="PANTHER" id="PTHR30560:SF3">
    <property type="entry name" value="TRIGGER FACTOR-LIKE PROTEIN TIG, CHLOROPLASTIC"/>
    <property type="match status" value="1"/>
</dbReference>
<dbReference type="Pfam" id="PF00254">
    <property type="entry name" value="FKBP_C"/>
    <property type="match status" value="1"/>
</dbReference>
<dbReference type="Pfam" id="PF05698">
    <property type="entry name" value="Trigger_C"/>
    <property type="match status" value="1"/>
</dbReference>
<dbReference type="Pfam" id="PF05697">
    <property type="entry name" value="Trigger_N"/>
    <property type="match status" value="1"/>
</dbReference>
<dbReference type="PIRSF" id="PIRSF003095">
    <property type="entry name" value="Trigger_factor"/>
    <property type="match status" value="1"/>
</dbReference>
<dbReference type="SUPFAM" id="SSF54534">
    <property type="entry name" value="FKBP-like"/>
    <property type="match status" value="1"/>
</dbReference>
<dbReference type="SUPFAM" id="SSF109998">
    <property type="entry name" value="Triger factor/SurA peptide-binding domain-like"/>
    <property type="match status" value="1"/>
</dbReference>
<dbReference type="SUPFAM" id="SSF102735">
    <property type="entry name" value="Trigger factor ribosome-binding domain"/>
    <property type="match status" value="1"/>
</dbReference>
<dbReference type="PROSITE" id="PS50059">
    <property type="entry name" value="FKBP_PPIASE"/>
    <property type="match status" value="1"/>
</dbReference>
<proteinExistence type="inferred from homology"/>